<organism>
    <name type="scientific">Acanthamoeba polyphaga mimivirus</name>
    <name type="common">APMV</name>
    <dbReference type="NCBI Taxonomy" id="212035"/>
    <lineage>
        <taxon>Viruses</taxon>
        <taxon>Varidnaviria</taxon>
        <taxon>Bamfordvirae</taxon>
        <taxon>Nucleocytoviricota</taxon>
        <taxon>Megaviricetes</taxon>
        <taxon>Imitervirales</taxon>
        <taxon>Mimiviridae</taxon>
        <taxon>Megamimivirinae</taxon>
        <taxon>Mimivirus</taxon>
        <taxon>Mimivirus bradfordmassiliense</taxon>
    </lineage>
</organism>
<name>YL226_MIMIV</name>
<proteinExistence type="predicted"/>
<dbReference type="EMBL" id="AY653733">
    <property type="protein sequence ID" value="AAV50499.1"/>
    <property type="molecule type" value="Genomic_DNA"/>
</dbReference>
<dbReference type="SMR" id="Q5UQC0"/>
<dbReference type="KEGG" id="vg:9924833"/>
<dbReference type="Proteomes" id="UP000001134">
    <property type="component" value="Genome"/>
</dbReference>
<dbReference type="SUPFAM" id="SSF140860">
    <property type="entry name" value="Pseudo ankyrin repeat-like"/>
    <property type="match status" value="1"/>
</dbReference>
<organismHost>
    <name type="scientific">Acanthamoeba polyphaga</name>
    <name type="common">Amoeba</name>
    <dbReference type="NCBI Taxonomy" id="5757"/>
</organismHost>
<keyword id="KW-1185">Reference proteome</keyword>
<feature type="chain" id="PRO_0000250625" description="Uncharacterized protein L226">
    <location>
        <begin position="1"/>
        <end position="690"/>
    </location>
</feature>
<protein>
    <recommendedName>
        <fullName>Uncharacterized protein L226</fullName>
    </recommendedName>
</protein>
<accession>Q5UQC0</accession>
<reference key="1">
    <citation type="journal article" date="2004" name="Science">
        <title>The 1.2-megabase genome sequence of Mimivirus.</title>
        <authorList>
            <person name="Raoult D."/>
            <person name="Audic S."/>
            <person name="Robert C."/>
            <person name="Abergel C."/>
            <person name="Renesto P."/>
            <person name="Ogata H."/>
            <person name="La Scola B."/>
            <person name="Susan M."/>
            <person name="Claverie J.-M."/>
        </authorList>
    </citation>
    <scope>NUCLEOTIDE SEQUENCE [LARGE SCALE GENOMIC DNA]</scope>
    <source>
        <strain>Rowbotham-Bradford</strain>
    </source>
</reference>
<gene>
    <name type="ordered locus">MIMI_L226</name>
</gene>
<sequence length="690" mass="80453">MNLEGKTFYLLEENGTSEYPLYKIIDKTYILSNIKDIVAHIVKCDYDDDYTDDEAEDVSEGVVEKTTITEIQLDFSNPKFVVNNFIPDENQAANGIYYTNSIIKIGEHDIYDENFLIELIEESSQSKVFPENTCNLYRFGLNSGKFNLCDVLIQKGIEYKCTDHNYGRPLIVLYPDNGEIEEIYLYLLKNMEHFKDDFVKIIQAVTEDSYEFDVLKSYIEYAQCTNIPINYLEISINIIKIHHKTECIKLFIEMGLVNAQDIFYESCLHFSDLTGYLVDQGVEFNFSDVFSLDLPLDTLEYFTEKGFEPTDEMIVNKLNDSNKSTPKINNDSSSFGTIMIMTPDYSFTRYKPPYYSILIDFLLNNKYLKSHHINQNVIDKLIEESSLIELVKLDKEFDIKSYIDLNILIKEAIDSDIWFVVKHCIENGINIDDCMSYALDKSMMYIVKKLKKLGAIVPDNFIELDKINIDDQEHIQMCINKGMDITTIYNEIILNGSHKTLKYIANQMIQQGLKLPKITNSLIYFKYQKYIKCDKHIKVIRNLNIDFTPIQQVVLAINDCDIETAKYLIGQYQIHDNLKILFMSVISQNIEFTKYLIEVNNFDKTYTGWALVLSTYNYEMFRSVLDYTGIDVNTRQQEIILMVNPNDVNVDDTIDYLHLMGYPNIFKTIDLISKDDKPIYKFLKKFNIEI</sequence>